<keyword id="KW-1185">Reference proteome</keyword>
<keyword id="KW-0687">Ribonucleoprotein</keyword>
<keyword id="KW-0689">Ribosomal protein</keyword>
<keyword id="KW-0694">RNA-binding</keyword>
<keyword id="KW-0699">rRNA-binding</keyword>
<keyword id="KW-0820">tRNA-binding</keyword>
<sequence length="138" mass="15806">MLIPRKVKHRKQHHPRQRGIASGGTKVNFGDYGIQALEHAYVTNRQIESARIAINRHIKRGGKVWINIFPDRPLTKKPAETRMGSGKGSPEWWVVNVKPGRVLFELSYPNEQTARAALTRAIHKLPIKARIVTREEQF</sequence>
<proteinExistence type="inferred from homology"/>
<reference key="1">
    <citation type="journal article" date="2001" name="Nature">
        <title>Massive gene decay in the leprosy bacillus.</title>
        <authorList>
            <person name="Cole S.T."/>
            <person name="Eiglmeier K."/>
            <person name="Parkhill J."/>
            <person name="James K.D."/>
            <person name="Thomson N.R."/>
            <person name="Wheeler P.R."/>
            <person name="Honore N."/>
            <person name="Garnier T."/>
            <person name="Churcher C.M."/>
            <person name="Harris D.E."/>
            <person name="Mungall K.L."/>
            <person name="Basham D."/>
            <person name="Brown D."/>
            <person name="Chillingworth T."/>
            <person name="Connor R."/>
            <person name="Davies R.M."/>
            <person name="Devlin K."/>
            <person name="Duthoy S."/>
            <person name="Feltwell T."/>
            <person name="Fraser A."/>
            <person name="Hamlin N."/>
            <person name="Holroyd S."/>
            <person name="Hornsby T."/>
            <person name="Jagels K."/>
            <person name="Lacroix C."/>
            <person name="Maclean J."/>
            <person name="Moule S."/>
            <person name="Murphy L.D."/>
            <person name="Oliver K."/>
            <person name="Quail M.A."/>
            <person name="Rajandream M.A."/>
            <person name="Rutherford K.M."/>
            <person name="Rutter S."/>
            <person name="Seeger K."/>
            <person name="Simon S."/>
            <person name="Simmonds M."/>
            <person name="Skelton J."/>
            <person name="Squares R."/>
            <person name="Squares S."/>
            <person name="Stevens K."/>
            <person name="Taylor K."/>
            <person name="Whitehead S."/>
            <person name="Woodward J.R."/>
            <person name="Barrell B.G."/>
        </authorList>
    </citation>
    <scope>NUCLEOTIDE SEQUENCE [LARGE SCALE GENOMIC DNA]</scope>
    <source>
        <strain>TN</strain>
    </source>
</reference>
<dbReference type="EMBL" id="Z98756">
    <property type="protein sequence ID" value="CAB11441.1"/>
    <property type="molecule type" value="Genomic_DNA"/>
</dbReference>
<dbReference type="EMBL" id="AL583923">
    <property type="protein sequence ID" value="CAC30810.1"/>
    <property type="molecule type" value="Genomic_DNA"/>
</dbReference>
<dbReference type="PIR" id="T45371">
    <property type="entry name" value="T45371"/>
</dbReference>
<dbReference type="RefSeq" id="NP_302258.1">
    <property type="nucleotide sequence ID" value="NC_002677.1"/>
</dbReference>
<dbReference type="RefSeq" id="WP_010908579.1">
    <property type="nucleotide sequence ID" value="NC_002677.1"/>
</dbReference>
<dbReference type="SMR" id="O32988"/>
<dbReference type="STRING" id="272631.gene:17575704"/>
<dbReference type="KEGG" id="mle:ML1856"/>
<dbReference type="PATRIC" id="fig|272631.5.peg.3517"/>
<dbReference type="Leproma" id="ML1856"/>
<dbReference type="eggNOG" id="COG0197">
    <property type="taxonomic scope" value="Bacteria"/>
</dbReference>
<dbReference type="HOGENOM" id="CLU_078858_2_1_11"/>
<dbReference type="OrthoDB" id="9802589at2"/>
<dbReference type="Proteomes" id="UP000000806">
    <property type="component" value="Chromosome"/>
</dbReference>
<dbReference type="GO" id="GO:0022625">
    <property type="term" value="C:cytosolic large ribosomal subunit"/>
    <property type="evidence" value="ECO:0007669"/>
    <property type="project" value="TreeGrafter"/>
</dbReference>
<dbReference type="GO" id="GO:0019843">
    <property type="term" value="F:rRNA binding"/>
    <property type="evidence" value="ECO:0007669"/>
    <property type="project" value="UniProtKB-UniRule"/>
</dbReference>
<dbReference type="GO" id="GO:0003735">
    <property type="term" value="F:structural constituent of ribosome"/>
    <property type="evidence" value="ECO:0007669"/>
    <property type="project" value="InterPro"/>
</dbReference>
<dbReference type="GO" id="GO:0000049">
    <property type="term" value="F:tRNA binding"/>
    <property type="evidence" value="ECO:0007669"/>
    <property type="project" value="UniProtKB-KW"/>
</dbReference>
<dbReference type="GO" id="GO:0006412">
    <property type="term" value="P:translation"/>
    <property type="evidence" value="ECO:0007669"/>
    <property type="project" value="UniProtKB-UniRule"/>
</dbReference>
<dbReference type="CDD" id="cd01433">
    <property type="entry name" value="Ribosomal_L16_L10e"/>
    <property type="match status" value="1"/>
</dbReference>
<dbReference type="FunFam" id="3.90.1170.10:FF:000001">
    <property type="entry name" value="50S ribosomal protein L16"/>
    <property type="match status" value="1"/>
</dbReference>
<dbReference type="Gene3D" id="3.90.1170.10">
    <property type="entry name" value="Ribosomal protein L10e/L16"/>
    <property type="match status" value="1"/>
</dbReference>
<dbReference type="HAMAP" id="MF_01342">
    <property type="entry name" value="Ribosomal_uL16"/>
    <property type="match status" value="1"/>
</dbReference>
<dbReference type="InterPro" id="IPR047873">
    <property type="entry name" value="Ribosomal_uL16"/>
</dbReference>
<dbReference type="InterPro" id="IPR000114">
    <property type="entry name" value="Ribosomal_uL16_bact-type"/>
</dbReference>
<dbReference type="InterPro" id="IPR020798">
    <property type="entry name" value="Ribosomal_uL16_CS"/>
</dbReference>
<dbReference type="InterPro" id="IPR016180">
    <property type="entry name" value="Ribosomal_uL16_dom"/>
</dbReference>
<dbReference type="InterPro" id="IPR036920">
    <property type="entry name" value="Ribosomal_uL16_sf"/>
</dbReference>
<dbReference type="NCBIfam" id="TIGR01164">
    <property type="entry name" value="rplP_bact"/>
    <property type="match status" value="1"/>
</dbReference>
<dbReference type="PANTHER" id="PTHR12220">
    <property type="entry name" value="50S/60S RIBOSOMAL PROTEIN L16"/>
    <property type="match status" value="1"/>
</dbReference>
<dbReference type="PANTHER" id="PTHR12220:SF13">
    <property type="entry name" value="LARGE RIBOSOMAL SUBUNIT PROTEIN UL16M"/>
    <property type="match status" value="1"/>
</dbReference>
<dbReference type="Pfam" id="PF00252">
    <property type="entry name" value="Ribosomal_L16"/>
    <property type="match status" value="1"/>
</dbReference>
<dbReference type="PRINTS" id="PR00060">
    <property type="entry name" value="RIBOSOMALL16"/>
</dbReference>
<dbReference type="SUPFAM" id="SSF54686">
    <property type="entry name" value="Ribosomal protein L16p/L10e"/>
    <property type="match status" value="1"/>
</dbReference>
<dbReference type="PROSITE" id="PS00586">
    <property type="entry name" value="RIBOSOMAL_L16_1"/>
    <property type="match status" value="1"/>
</dbReference>
<dbReference type="PROSITE" id="PS00701">
    <property type="entry name" value="RIBOSOMAL_L16_2"/>
    <property type="match status" value="1"/>
</dbReference>
<comment type="function">
    <text evidence="1">Binds 23S rRNA and is also seen to make contacts with the A and possibly P site tRNAs.</text>
</comment>
<comment type="subunit">
    <text evidence="1">Part of the 50S ribosomal subunit.</text>
</comment>
<comment type="similarity">
    <text evidence="1">Belongs to the universal ribosomal protein uL16 family.</text>
</comment>
<accession>O32988</accession>
<evidence type="ECO:0000255" key="1">
    <source>
        <dbReference type="HAMAP-Rule" id="MF_01342"/>
    </source>
</evidence>
<evidence type="ECO:0000256" key="2">
    <source>
        <dbReference type="SAM" id="MobiDB-lite"/>
    </source>
</evidence>
<evidence type="ECO:0000305" key="3"/>
<feature type="chain" id="PRO_0000062136" description="Large ribosomal subunit protein uL16">
    <location>
        <begin position="1"/>
        <end position="138"/>
    </location>
</feature>
<feature type="region of interest" description="Disordered" evidence="2">
    <location>
        <begin position="1"/>
        <end position="22"/>
    </location>
</feature>
<feature type="compositionally biased region" description="Basic residues" evidence="2">
    <location>
        <begin position="1"/>
        <end position="17"/>
    </location>
</feature>
<protein>
    <recommendedName>
        <fullName evidence="1">Large ribosomal subunit protein uL16</fullName>
    </recommendedName>
    <alternativeName>
        <fullName evidence="3">50S ribosomal protein L16</fullName>
    </alternativeName>
</protein>
<name>RL16_MYCLE</name>
<organism>
    <name type="scientific">Mycobacterium leprae (strain TN)</name>
    <dbReference type="NCBI Taxonomy" id="272631"/>
    <lineage>
        <taxon>Bacteria</taxon>
        <taxon>Bacillati</taxon>
        <taxon>Actinomycetota</taxon>
        <taxon>Actinomycetes</taxon>
        <taxon>Mycobacteriales</taxon>
        <taxon>Mycobacteriaceae</taxon>
        <taxon>Mycobacterium</taxon>
    </lineage>
</organism>
<gene>
    <name evidence="1" type="primary">rplP</name>
    <name type="ordered locus">ML1856</name>
    <name type="ORF">MLCB2492.09</name>
</gene>